<sequence>MKIPILPVVALLSLLALHAVQGAALGHPTIYPEDSSYNNYPTATEGLNNEFLNFKRLQSAFQSENFLNWHVITDMFKNAFPFINWDFFPKVKGLRSAAPDSQ</sequence>
<keyword id="KW-0025">Alternative splicing</keyword>
<keyword id="KW-0221">Differentiation</keyword>
<keyword id="KW-1185">Reference proteome</keyword>
<keyword id="KW-0964">Secreted</keyword>
<keyword id="KW-0732">Signal</keyword>
<accession>Q3V2T4</accession>
<accession>B7ZNU7</accession>
<accession>Q3V2T1</accession>
<organism>
    <name type="scientific">Mus musculus</name>
    <name type="common">Mouse</name>
    <dbReference type="NCBI Taxonomy" id="10090"/>
    <lineage>
        <taxon>Eukaryota</taxon>
        <taxon>Metazoa</taxon>
        <taxon>Chordata</taxon>
        <taxon>Craniata</taxon>
        <taxon>Vertebrata</taxon>
        <taxon>Euteleostomi</taxon>
        <taxon>Mammalia</taxon>
        <taxon>Eutheria</taxon>
        <taxon>Euarchontoglires</taxon>
        <taxon>Glires</taxon>
        <taxon>Rodentia</taxon>
        <taxon>Myomorpha</taxon>
        <taxon>Muroidea</taxon>
        <taxon>Muridae</taxon>
        <taxon>Murinae</taxon>
        <taxon>Mus</taxon>
        <taxon>Mus</taxon>
    </lineage>
</organism>
<reference evidence="10" key="1">
    <citation type="journal article" date="2004" name="Gene">
        <title>Identification of a conserved cluster of skin-specific genes encoding secreted proteins.</title>
        <authorList>
            <person name="Moffatt P."/>
            <person name="Salois P."/>
            <person name="St Amant N."/>
            <person name="Gaumond M.-H."/>
            <person name="Lanctot C."/>
        </authorList>
    </citation>
    <scope>NUCLEOTIDE SEQUENCE [MRNA] (ISOFORM 1)</scope>
    <scope>SUBCELLULAR LOCATION</scope>
    <scope>TISSUE SPECIFICITY</scope>
</reference>
<reference evidence="10 12" key="2">
    <citation type="journal article" date="2005" name="Science">
        <title>The transcriptional landscape of the mammalian genome.</title>
        <authorList>
            <person name="Carninci P."/>
            <person name="Kasukawa T."/>
            <person name="Katayama S."/>
            <person name="Gough J."/>
            <person name="Frith M.C."/>
            <person name="Maeda N."/>
            <person name="Oyama R."/>
            <person name="Ravasi T."/>
            <person name="Lenhard B."/>
            <person name="Wells C."/>
            <person name="Kodzius R."/>
            <person name="Shimokawa K."/>
            <person name="Bajic V.B."/>
            <person name="Brenner S.E."/>
            <person name="Batalov S."/>
            <person name="Forrest A.R."/>
            <person name="Zavolan M."/>
            <person name="Davis M.J."/>
            <person name="Wilming L.G."/>
            <person name="Aidinis V."/>
            <person name="Allen J.E."/>
            <person name="Ambesi-Impiombato A."/>
            <person name="Apweiler R."/>
            <person name="Aturaliya R.N."/>
            <person name="Bailey T.L."/>
            <person name="Bansal M."/>
            <person name="Baxter L."/>
            <person name="Beisel K.W."/>
            <person name="Bersano T."/>
            <person name="Bono H."/>
            <person name="Chalk A.M."/>
            <person name="Chiu K.P."/>
            <person name="Choudhary V."/>
            <person name="Christoffels A."/>
            <person name="Clutterbuck D.R."/>
            <person name="Crowe M.L."/>
            <person name="Dalla E."/>
            <person name="Dalrymple B.P."/>
            <person name="de Bono B."/>
            <person name="Della Gatta G."/>
            <person name="di Bernardo D."/>
            <person name="Down T."/>
            <person name="Engstrom P."/>
            <person name="Fagiolini M."/>
            <person name="Faulkner G."/>
            <person name="Fletcher C.F."/>
            <person name="Fukushima T."/>
            <person name="Furuno M."/>
            <person name="Futaki S."/>
            <person name="Gariboldi M."/>
            <person name="Georgii-Hemming P."/>
            <person name="Gingeras T.R."/>
            <person name="Gojobori T."/>
            <person name="Green R.E."/>
            <person name="Gustincich S."/>
            <person name="Harbers M."/>
            <person name="Hayashi Y."/>
            <person name="Hensch T.K."/>
            <person name="Hirokawa N."/>
            <person name="Hill D."/>
            <person name="Huminiecki L."/>
            <person name="Iacono M."/>
            <person name="Ikeo K."/>
            <person name="Iwama A."/>
            <person name="Ishikawa T."/>
            <person name="Jakt M."/>
            <person name="Kanapin A."/>
            <person name="Katoh M."/>
            <person name="Kawasawa Y."/>
            <person name="Kelso J."/>
            <person name="Kitamura H."/>
            <person name="Kitano H."/>
            <person name="Kollias G."/>
            <person name="Krishnan S.P."/>
            <person name="Kruger A."/>
            <person name="Kummerfeld S.K."/>
            <person name="Kurochkin I.V."/>
            <person name="Lareau L.F."/>
            <person name="Lazarevic D."/>
            <person name="Lipovich L."/>
            <person name="Liu J."/>
            <person name="Liuni S."/>
            <person name="McWilliam S."/>
            <person name="Madan Babu M."/>
            <person name="Madera M."/>
            <person name="Marchionni L."/>
            <person name="Matsuda H."/>
            <person name="Matsuzawa S."/>
            <person name="Miki H."/>
            <person name="Mignone F."/>
            <person name="Miyake S."/>
            <person name="Morris K."/>
            <person name="Mottagui-Tabar S."/>
            <person name="Mulder N."/>
            <person name="Nakano N."/>
            <person name="Nakauchi H."/>
            <person name="Ng P."/>
            <person name="Nilsson R."/>
            <person name="Nishiguchi S."/>
            <person name="Nishikawa S."/>
            <person name="Nori F."/>
            <person name="Ohara O."/>
            <person name="Okazaki Y."/>
            <person name="Orlando V."/>
            <person name="Pang K.C."/>
            <person name="Pavan W.J."/>
            <person name="Pavesi G."/>
            <person name="Pesole G."/>
            <person name="Petrovsky N."/>
            <person name="Piazza S."/>
            <person name="Reed J."/>
            <person name="Reid J.F."/>
            <person name="Ring B.Z."/>
            <person name="Ringwald M."/>
            <person name="Rost B."/>
            <person name="Ruan Y."/>
            <person name="Salzberg S.L."/>
            <person name="Sandelin A."/>
            <person name="Schneider C."/>
            <person name="Schoenbach C."/>
            <person name="Sekiguchi K."/>
            <person name="Semple C.A."/>
            <person name="Seno S."/>
            <person name="Sessa L."/>
            <person name="Sheng Y."/>
            <person name="Shibata Y."/>
            <person name="Shimada H."/>
            <person name="Shimada K."/>
            <person name="Silva D."/>
            <person name="Sinclair B."/>
            <person name="Sperling S."/>
            <person name="Stupka E."/>
            <person name="Sugiura K."/>
            <person name="Sultana R."/>
            <person name="Takenaka Y."/>
            <person name="Taki K."/>
            <person name="Tammoja K."/>
            <person name="Tan S.L."/>
            <person name="Tang S."/>
            <person name="Taylor M.S."/>
            <person name="Tegner J."/>
            <person name="Teichmann S.A."/>
            <person name="Ueda H.R."/>
            <person name="van Nimwegen E."/>
            <person name="Verardo R."/>
            <person name="Wei C.L."/>
            <person name="Yagi K."/>
            <person name="Yamanishi H."/>
            <person name="Zabarovsky E."/>
            <person name="Zhu S."/>
            <person name="Zimmer A."/>
            <person name="Hide W."/>
            <person name="Bult C."/>
            <person name="Grimmond S.M."/>
            <person name="Teasdale R.D."/>
            <person name="Liu E.T."/>
            <person name="Brusic V."/>
            <person name="Quackenbush J."/>
            <person name="Wahlestedt C."/>
            <person name="Mattick J.S."/>
            <person name="Hume D.A."/>
            <person name="Kai C."/>
            <person name="Sasaki D."/>
            <person name="Tomaru Y."/>
            <person name="Fukuda S."/>
            <person name="Kanamori-Katayama M."/>
            <person name="Suzuki M."/>
            <person name="Aoki J."/>
            <person name="Arakawa T."/>
            <person name="Iida J."/>
            <person name="Imamura K."/>
            <person name="Itoh M."/>
            <person name="Kato T."/>
            <person name="Kawaji H."/>
            <person name="Kawagashira N."/>
            <person name="Kawashima T."/>
            <person name="Kojima M."/>
            <person name="Kondo S."/>
            <person name="Konno H."/>
            <person name="Nakano K."/>
            <person name="Ninomiya N."/>
            <person name="Nishio T."/>
            <person name="Okada M."/>
            <person name="Plessy C."/>
            <person name="Shibata K."/>
            <person name="Shiraki T."/>
            <person name="Suzuki S."/>
            <person name="Tagami M."/>
            <person name="Waki K."/>
            <person name="Watahiki A."/>
            <person name="Okamura-Oho Y."/>
            <person name="Suzuki H."/>
            <person name="Kawai J."/>
            <person name="Hayashizaki Y."/>
        </authorList>
    </citation>
    <scope>NUCLEOTIDE SEQUENCE [LARGE SCALE MRNA] (ISOFORMS 1 AND 2)</scope>
    <source>
        <strain evidence="12">C57BL/6J</strain>
        <tissue evidence="12">Embryo</tissue>
    </source>
</reference>
<reference evidence="10 11" key="3">
    <citation type="journal article" date="2004" name="Genome Res.">
        <title>The status, quality, and expansion of the NIH full-length cDNA project: the Mammalian Gene Collection (MGC).</title>
        <authorList>
            <consortium name="The MGC Project Team"/>
        </authorList>
    </citation>
    <scope>NUCLEOTIDE SEQUENCE [LARGE SCALE MRNA] (ISOFORMS 1 AND 2)</scope>
    <source>
        <tissue evidence="11">Embryo</tissue>
    </source>
</reference>
<gene>
    <name evidence="13" type="primary">Krtdap</name>
    <name evidence="7" type="synonym">Kdap</name>
</gene>
<feature type="signal peptide" evidence="3">
    <location>
        <begin position="1"/>
        <end position="22"/>
    </location>
</feature>
<feature type="chain" id="PRO_0000317056" description="Keratinocyte differentiation-associated protein" evidence="3">
    <location>
        <begin position="23"/>
        <end position="102"/>
    </location>
</feature>
<feature type="splice variant" id="VSP_052660" description="In isoform 2." evidence="8 9">
    <original>VKGLRSAAPDSQ</original>
    <variation>T</variation>
    <location>
        <begin position="91"/>
        <end position="102"/>
    </location>
</feature>
<feature type="sequence conflict" description="In Ref. 2; BAE20716." evidence="10" ref="2">
    <original>K</original>
    <variation>R</variation>
    <location>
        <position position="2"/>
    </location>
</feature>
<evidence type="ECO:0000250" key="1">
    <source>
        <dbReference type="UniProtKB" id="P60985"/>
    </source>
</evidence>
<evidence type="ECO:0000250" key="2">
    <source>
        <dbReference type="UniProtKB" id="P85411"/>
    </source>
</evidence>
<evidence type="ECO:0000255" key="3"/>
<evidence type="ECO:0000269" key="4">
    <source>
    </source>
</evidence>
<evidence type="ECO:0000269" key="5">
    <source>
    </source>
</evidence>
<evidence type="ECO:0000269" key="6">
    <source>
    </source>
</evidence>
<evidence type="ECO:0000303" key="7">
    <source>
    </source>
</evidence>
<evidence type="ECO:0000303" key="8">
    <source>
    </source>
</evidence>
<evidence type="ECO:0000303" key="9">
    <source>
    </source>
</evidence>
<evidence type="ECO:0000305" key="10"/>
<evidence type="ECO:0000312" key="11">
    <source>
        <dbReference type="EMBL" id="AAI32511.1"/>
    </source>
</evidence>
<evidence type="ECO:0000312" key="12">
    <source>
        <dbReference type="EMBL" id="BAE20713.1"/>
    </source>
</evidence>
<evidence type="ECO:0000312" key="13">
    <source>
        <dbReference type="MGI" id="MGI:1928282"/>
    </source>
</evidence>
<protein>
    <recommendedName>
        <fullName>Keratinocyte differentiation-associated protein</fullName>
    </recommendedName>
</protein>
<comment type="function">
    <text evidence="1 2">May act as a soluble regulator of keratinocyte differentiation. May play an important role in embryonic skin morphogenesis (By similarity).</text>
</comment>
<comment type="subcellular location">
    <subcellularLocation>
        <location evidence="4">Secreted</location>
    </subcellularLocation>
</comment>
<comment type="alternative products">
    <event type="alternative splicing"/>
    <isoform>
        <id>Q3V2T4-1</id>
        <name evidence="4 5 6">1</name>
        <sequence type="displayed"/>
    </isoform>
    <isoform>
        <id>Q3V2T4-2</id>
        <name evidence="6">2</name>
        <sequence type="described" ref="VSP_052660"/>
    </isoform>
</comment>
<comment type="tissue specificity">
    <text evidence="4">Expression restricted to suprabasal keratinocytes of the epidermis.</text>
</comment>
<dbReference type="EMBL" id="AK131603">
    <property type="protein sequence ID" value="BAE20713.1"/>
    <property type="molecule type" value="mRNA"/>
</dbReference>
<dbReference type="EMBL" id="AK131606">
    <property type="protein sequence ID" value="BAE20716.1"/>
    <property type="molecule type" value="mRNA"/>
</dbReference>
<dbReference type="EMBL" id="BC132510">
    <property type="protein sequence ID" value="AAI32511.1"/>
    <property type="molecule type" value="mRNA"/>
</dbReference>
<dbReference type="EMBL" id="BC132512">
    <property type="protein sequence ID" value="AAI32513.1"/>
    <property type="molecule type" value="mRNA"/>
</dbReference>
<dbReference type="EMBL" id="BC145438">
    <property type="protein sequence ID" value="AAI45439.1"/>
    <property type="molecule type" value="mRNA"/>
</dbReference>
<dbReference type="CCDS" id="CCDS21110.1">
    <molecule id="Q3V2T4-1"/>
</dbReference>
<dbReference type="CCDS" id="CCDS90204.1">
    <molecule id="Q3V2T4-2"/>
</dbReference>
<dbReference type="RefSeq" id="NP_001028303.1">
    <molecule id="Q3V2T4-1"/>
    <property type="nucleotide sequence ID" value="NM_001033131.4"/>
</dbReference>
<dbReference type="RefSeq" id="NP_001350939.1">
    <molecule id="Q3V2T4-2"/>
    <property type="nucleotide sequence ID" value="NM_001364010.1"/>
</dbReference>
<dbReference type="BioGRID" id="211097">
    <property type="interactions" value="1"/>
</dbReference>
<dbReference type="FunCoup" id="Q3V2T4">
    <property type="interactions" value="27"/>
</dbReference>
<dbReference type="STRING" id="10090.ENSMUSP00000096159"/>
<dbReference type="iPTMnet" id="Q3V2T4"/>
<dbReference type="PhosphoSitePlus" id="Q3V2T4"/>
<dbReference type="PaxDb" id="10090-ENSMUSP00000096159"/>
<dbReference type="PeptideAtlas" id="Q3V2T4"/>
<dbReference type="ProteomicsDB" id="264801">
    <molecule id="Q3V2T4-1"/>
</dbReference>
<dbReference type="ProteomicsDB" id="264802">
    <molecule id="Q3V2T4-2"/>
</dbReference>
<dbReference type="Antibodypedia" id="74487">
    <property type="antibodies" value="4 antibodies from 4 providers"/>
</dbReference>
<dbReference type="Ensembl" id="ENSMUST00000098559.3">
    <molecule id="Q3V2T4-1"/>
    <property type="protein sequence ID" value="ENSMUSP00000096159.2"/>
    <property type="gene ID" value="ENSMUSG00000074199.8"/>
</dbReference>
<dbReference type="Ensembl" id="ENSMUST00000190990.7">
    <molecule id="Q3V2T4-2"/>
    <property type="protein sequence ID" value="ENSMUSP00000139461.2"/>
    <property type="gene ID" value="ENSMUSG00000074199.8"/>
</dbReference>
<dbReference type="GeneID" id="64661"/>
<dbReference type="KEGG" id="mmu:64661"/>
<dbReference type="UCSC" id="uc009ggl.1">
    <molecule id="Q3V2T4-2"/>
    <property type="organism name" value="mouse"/>
</dbReference>
<dbReference type="UCSC" id="uc009ggm.1">
    <molecule id="Q3V2T4-1"/>
    <property type="organism name" value="mouse"/>
</dbReference>
<dbReference type="AGR" id="MGI:1928282"/>
<dbReference type="CTD" id="388533"/>
<dbReference type="MGI" id="MGI:1928282">
    <property type="gene designation" value="Krtdap"/>
</dbReference>
<dbReference type="VEuPathDB" id="HostDB:ENSMUSG00000074199"/>
<dbReference type="eggNOG" id="ENOG502STEA">
    <property type="taxonomic scope" value="Eukaryota"/>
</dbReference>
<dbReference type="GeneTree" id="ENSGT00390000009097"/>
<dbReference type="InParanoid" id="Q3V2T4"/>
<dbReference type="OMA" id="WRSAFQS"/>
<dbReference type="OrthoDB" id="9627508at2759"/>
<dbReference type="PhylomeDB" id="Q3V2T4"/>
<dbReference type="TreeFam" id="TF341267"/>
<dbReference type="BioGRID-ORCS" id="64661">
    <property type="hits" value="2 hits in 77 CRISPR screens"/>
</dbReference>
<dbReference type="ChiTaRS" id="Krtdap">
    <property type="organism name" value="mouse"/>
</dbReference>
<dbReference type="PRO" id="PR:Q3V2T4"/>
<dbReference type="Proteomes" id="UP000000589">
    <property type="component" value="Chromosome 7"/>
</dbReference>
<dbReference type="RNAct" id="Q3V2T4">
    <property type="molecule type" value="protein"/>
</dbReference>
<dbReference type="Bgee" id="ENSMUSG00000074199">
    <property type="expression patterns" value="Expressed in tail skin and 87 other cell types or tissues"/>
</dbReference>
<dbReference type="ExpressionAtlas" id="Q3V2T4">
    <property type="expression patterns" value="baseline and differential"/>
</dbReference>
<dbReference type="GO" id="GO:0005615">
    <property type="term" value="C:extracellular space"/>
    <property type="evidence" value="ECO:0007669"/>
    <property type="project" value="Ensembl"/>
</dbReference>
<dbReference type="GO" id="GO:0042599">
    <property type="term" value="C:lamellar body"/>
    <property type="evidence" value="ECO:0007669"/>
    <property type="project" value="Ensembl"/>
</dbReference>
<dbReference type="GO" id="GO:0030154">
    <property type="term" value="P:cell differentiation"/>
    <property type="evidence" value="ECO:0007669"/>
    <property type="project" value="UniProtKB-KW"/>
</dbReference>
<dbReference type="InterPro" id="IPR028196">
    <property type="entry name" value="KRTDAP"/>
</dbReference>
<dbReference type="PANTHER" id="PTHR36463">
    <property type="entry name" value="KERATINOCYTE DIFFERENTIATION-ASSOCIATED PROTEIN"/>
    <property type="match status" value="1"/>
</dbReference>
<dbReference type="PANTHER" id="PTHR36463:SF1">
    <property type="entry name" value="KERATINOCYTE DIFFERENTIATION-ASSOCIATED PROTEIN"/>
    <property type="match status" value="1"/>
</dbReference>
<dbReference type="Pfam" id="PF15200">
    <property type="entry name" value="KRTDAP"/>
    <property type="match status" value="1"/>
</dbReference>
<name>KTDAP_MOUSE</name>
<proteinExistence type="evidence at transcript level"/>